<name>GYRB_RICFE</name>
<organism>
    <name type="scientific">Rickettsia felis (strain ATCC VR-1525 / URRWXCal2)</name>
    <name type="common">Rickettsia azadi</name>
    <dbReference type="NCBI Taxonomy" id="315456"/>
    <lineage>
        <taxon>Bacteria</taxon>
        <taxon>Pseudomonadati</taxon>
        <taxon>Pseudomonadota</taxon>
        <taxon>Alphaproteobacteria</taxon>
        <taxon>Rickettsiales</taxon>
        <taxon>Rickettsiaceae</taxon>
        <taxon>Rickettsieae</taxon>
        <taxon>Rickettsia</taxon>
        <taxon>spotted fever group</taxon>
    </lineage>
</organism>
<sequence>MSEIEEKFNESSYGADSIKVLKGLEAVRKRPGMYIGDVGDGSGLHHMIYEVVDNAIDESLAGYCDLVRVTLNKNGSVTVSDNGRGIPVEIHQEEGISAAEVIMTQLHAGGKFDQNSYKVSGGLHGVGVSVVNALSEWLELRIWRNNKEYLIRFNNGITEAPLAVVNEDINKKGTEVTFFPSVETFTNIEFDFGTIEHRLRELAFLNSGVKILLVDNRFEEAKEVEFYYTGGIEAYVKYIDRAKHAVHPCIVVNTENTESGISLELAMHWNDSYHENILCFTNNIRQRDGGTHLSAFKSAITRVITSYLDTTGLNKKSKNDFSGEDTREGLCCVLSVKVPDPKFSSQTKDKLVSSEVRPVVENAVYTKVLEWFEEHPAESKAIIAKIMEAANAREAARKARELTRRKSALEVSNLPGKLADCHAKDPAISELFIVEGDSAGGTAKQGRDSKIQAILPLRGKILNVERARFDKMLGSDQIGTLITALGTGVDNREFSLEKLRYHKVIIMTDADVDGSHIRTLLLTFFYRHMPELINKGYLYIAQPPLYKVKKGAAEFYLKNEQALQDYLIKSTINDATLTLDGKEQLVGDNLEELINKVVKFNGLLDHASKKFNRSITEILAINDLLNNKIFELESDSRLQKALDVLNSLEESPDKTNWEVLKHENKVEFFRFSRGLKESKILLKEQLESFEFVQISKLALTIFDIFDKQLKLIVKSQEFGILTASQLLNAIIECGKRGISIQRFKGLGEMNSNQLWETTLDPAKRTLLQVRVAEVDEAEGIFSTLMGDVVEPRRLFIQANALNVVNLDV</sequence>
<comment type="function">
    <text evidence="1">A type II topoisomerase that negatively supercoils closed circular double-stranded (ds) DNA in an ATP-dependent manner to modulate DNA topology and maintain chromosomes in an underwound state. Negative supercoiling favors strand separation, and DNA replication, transcription, recombination and repair, all of which involve strand separation. Also able to catalyze the interconversion of other topological isomers of dsDNA rings, including catenanes and knotted rings. Type II topoisomerases break and join 2 DNA strands simultaneously in an ATP-dependent manner.</text>
</comment>
<comment type="catalytic activity">
    <reaction evidence="1">
        <text>ATP-dependent breakage, passage and rejoining of double-stranded DNA.</text>
        <dbReference type="EC" id="5.6.2.2"/>
    </reaction>
</comment>
<comment type="cofactor">
    <cofactor evidence="1">
        <name>Mg(2+)</name>
        <dbReference type="ChEBI" id="CHEBI:18420"/>
    </cofactor>
    <cofactor evidence="1">
        <name>Mn(2+)</name>
        <dbReference type="ChEBI" id="CHEBI:29035"/>
    </cofactor>
    <cofactor evidence="1">
        <name>Ca(2+)</name>
        <dbReference type="ChEBI" id="CHEBI:29108"/>
    </cofactor>
    <text evidence="1">Binds two Mg(2+) per subunit. The magnesium ions form salt bridges with both the protein and the DNA. Can also accept other divalent metal cations, such as Mn(2+) or Ca(2+).</text>
</comment>
<comment type="subunit">
    <text evidence="1">Heterotetramer, composed of two GyrA and two GyrB chains. In the heterotetramer, GyrA contains the active site tyrosine that forms a transient covalent intermediate with DNA, while GyrB binds cofactors and catalyzes ATP hydrolysis.</text>
</comment>
<comment type="subcellular location">
    <subcellularLocation>
        <location evidence="1">Cytoplasm</location>
    </subcellularLocation>
</comment>
<comment type="miscellaneous">
    <text evidence="1">Few gyrases are as efficient as E.coli at forming negative supercoils. Not all organisms have 2 type II topoisomerases; in organisms with a single type II topoisomerase this enzyme also has to decatenate newly replicated chromosomes.</text>
</comment>
<comment type="similarity">
    <text evidence="1">Belongs to the type II topoisomerase GyrB family.</text>
</comment>
<proteinExistence type="inferred from homology"/>
<keyword id="KW-0067">ATP-binding</keyword>
<keyword id="KW-0963">Cytoplasm</keyword>
<keyword id="KW-0238">DNA-binding</keyword>
<keyword id="KW-0413">Isomerase</keyword>
<keyword id="KW-0460">Magnesium</keyword>
<keyword id="KW-0479">Metal-binding</keyword>
<keyword id="KW-0547">Nucleotide-binding</keyword>
<keyword id="KW-0799">Topoisomerase</keyword>
<protein>
    <recommendedName>
        <fullName evidence="1">DNA gyrase subunit B</fullName>
        <ecNumber evidence="1">5.6.2.2</ecNumber>
    </recommendedName>
</protein>
<gene>
    <name evidence="1" type="primary">gyrB</name>
    <name type="ordered locus">RF_0947</name>
</gene>
<feature type="chain" id="PRO_0000273111" description="DNA gyrase subunit B">
    <location>
        <begin position="1"/>
        <end position="808"/>
    </location>
</feature>
<feature type="domain" description="Toprim" evidence="1">
    <location>
        <begin position="429"/>
        <end position="544"/>
    </location>
</feature>
<feature type="binding site" evidence="1">
    <location>
        <position position="435"/>
    </location>
    <ligand>
        <name>Mg(2+)</name>
        <dbReference type="ChEBI" id="CHEBI:18420"/>
        <label>1</label>
        <note>catalytic</note>
    </ligand>
</feature>
<feature type="binding site" evidence="1">
    <location>
        <position position="509"/>
    </location>
    <ligand>
        <name>Mg(2+)</name>
        <dbReference type="ChEBI" id="CHEBI:18420"/>
        <label>1</label>
        <note>catalytic</note>
    </ligand>
</feature>
<feature type="binding site" evidence="1">
    <location>
        <position position="509"/>
    </location>
    <ligand>
        <name>Mg(2+)</name>
        <dbReference type="ChEBI" id="CHEBI:18420"/>
        <label>2</label>
    </ligand>
</feature>
<feature type="binding site" evidence="1">
    <location>
        <position position="511"/>
    </location>
    <ligand>
        <name>Mg(2+)</name>
        <dbReference type="ChEBI" id="CHEBI:18420"/>
        <label>2</label>
    </ligand>
</feature>
<feature type="site" description="Interaction with DNA" evidence="1">
    <location>
        <position position="460"/>
    </location>
</feature>
<feature type="site" description="Interaction with DNA" evidence="1">
    <location>
        <position position="463"/>
    </location>
</feature>
<reference key="1">
    <citation type="journal article" date="2005" name="PLoS Biol.">
        <title>The genome sequence of Rickettsia felis identifies the first putative conjugative plasmid in an obligate intracellular parasite.</title>
        <authorList>
            <person name="Ogata H."/>
            <person name="Renesto P."/>
            <person name="Audic S."/>
            <person name="Robert C."/>
            <person name="Blanc G."/>
            <person name="Fournier P.-E."/>
            <person name="Parinello H."/>
            <person name="Claverie J.-M."/>
            <person name="Raoult D."/>
        </authorList>
    </citation>
    <scope>NUCLEOTIDE SEQUENCE [LARGE SCALE GENOMIC DNA]</scope>
    <source>
        <strain>ATCC VR-1525 / URRWXCal2</strain>
    </source>
</reference>
<dbReference type="EC" id="5.6.2.2" evidence="1"/>
<dbReference type="EMBL" id="CP000053">
    <property type="protein sequence ID" value="AAY61798.1"/>
    <property type="molecule type" value="Genomic_DNA"/>
</dbReference>
<dbReference type="SMR" id="Q4UKX5"/>
<dbReference type="STRING" id="315456.RF_0947"/>
<dbReference type="KEGG" id="rfe:RF_0947"/>
<dbReference type="eggNOG" id="COG0187">
    <property type="taxonomic scope" value="Bacteria"/>
</dbReference>
<dbReference type="HOGENOM" id="CLU_006146_4_1_5"/>
<dbReference type="OrthoDB" id="9802808at2"/>
<dbReference type="Proteomes" id="UP000008548">
    <property type="component" value="Chromosome"/>
</dbReference>
<dbReference type="GO" id="GO:0005694">
    <property type="term" value="C:chromosome"/>
    <property type="evidence" value="ECO:0007669"/>
    <property type="project" value="InterPro"/>
</dbReference>
<dbReference type="GO" id="GO:0005737">
    <property type="term" value="C:cytoplasm"/>
    <property type="evidence" value="ECO:0007669"/>
    <property type="project" value="UniProtKB-SubCell"/>
</dbReference>
<dbReference type="GO" id="GO:0005524">
    <property type="term" value="F:ATP binding"/>
    <property type="evidence" value="ECO:0007669"/>
    <property type="project" value="UniProtKB-UniRule"/>
</dbReference>
<dbReference type="GO" id="GO:0003677">
    <property type="term" value="F:DNA binding"/>
    <property type="evidence" value="ECO:0007669"/>
    <property type="project" value="UniProtKB-KW"/>
</dbReference>
<dbReference type="GO" id="GO:0003918">
    <property type="term" value="F:DNA topoisomerase type II (double strand cut, ATP-hydrolyzing) activity"/>
    <property type="evidence" value="ECO:0007669"/>
    <property type="project" value="UniProtKB-UniRule"/>
</dbReference>
<dbReference type="GO" id="GO:0046872">
    <property type="term" value="F:metal ion binding"/>
    <property type="evidence" value="ECO:0007669"/>
    <property type="project" value="UniProtKB-KW"/>
</dbReference>
<dbReference type="GO" id="GO:0006265">
    <property type="term" value="P:DNA topological change"/>
    <property type="evidence" value="ECO:0007669"/>
    <property type="project" value="UniProtKB-UniRule"/>
</dbReference>
<dbReference type="GO" id="GO:0006261">
    <property type="term" value="P:DNA-templated DNA replication"/>
    <property type="evidence" value="ECO:0007669"/>
    <property type="project" value="UniProtKB-UniRule"/>
</dbReference>
<dbReference type="CDD" id="cd16928">
    <property type="entry name" value="HATPase_GyrB-like"/>
    <property type="match status" value="1"/>
</dbReference>
<dbReference type="CDD" id="cd00822">
    <property type="entry name" value="TopoII_Trans_DNA_gyrase"/>
    <property type="match status" value="1"/>
</dbReference>
<dbReference type="CDD" id="cd03366">
    <property type="entry name" value="TOPRIM_TopoIIA_GyrB"/>
    <property type="match status" value="1"/>
</dbReference>
<dbReference type="FunFam" id="3.30.230.10:FF:000005">
    <property type="entry name" value="DNA gyrase subunit B"/>
    <property type="match status" value="1"/>
</dbReference>
<dbReference type="FunFam" id="3.30.565.10:FF:000002">
    <property type="entry name" value="DNA gyrase subunit B"/>
    <property type="match status" value="1"/>
</dbReference>
<dbReference type="FunFam" id="3.40.50.670:FF:000001">
    <property type="entry name" value="DNA topoisomerase 2"/>
    <property type="match status" value="1"/>
</dbReference>
<dbReference type="Gene3D" id="3.30.230.10">
    <property type="match status" value="1"/>
</dbReference>
<dbReference type="Gene3D" id="3.40.50.670">
    <property type="match status" value="2"/>
</dbReference>
<dbReference type="Gene3D" id="3.30.565.10">
    <property type="entry name" value="Histidine kinase-like ATPase, C-terminal domain"/>
    <property type="match status" value="1"/>
</dbReference>
<dbReference type="HAMAP" id="MF_01898">
    <property type="entry name" value="GyrB"/>
    <property type="match status" value="1"/>
</dbReference>
<dbReference type="InterPro" id="IPR002288">
    <property type="entry name" value="DNA_gyrase_B_C"/>
</dbReference>
<dbReference type="InterPro" id="IPR011557">
    <property type="entry name" value="GyrB"/>
</dbReference>
<dbReference type="InterPro" id="IPR049353">
    <property type="entry name" value="GyrB_hook"/>
</dbReference>
<dbReference type="InterPro" id="IPR036890">
    <property type="entry name" value="HATPase_C_sf"/>
</dbReference>
<dbReference type="InterPro" id="IPR020568">
    <property type="entry name" value="Ribosomal_Su5_D2-typ_SF"/>
</dbReference>
<dbReference type="InterPro" id="IPR014721">
    <property type="entry name" value="Ribsml_uS5_D2-typ_fold_subgr"/>
</dbReference>
<dbReference type="InterPro" id="IPR001241">
    <property type="entry name" value="Topo_IIA"/>
</dbReference>
<dbReference type="InterPro" id="IPR013760">
    <property type="entry name" value="Topo_IIA-like_dom_sf"/>
</dbReference>
<dbReference type="InterPro" id="IPR000565">
    <property type="entry name" value="Topo_IIA_B"/>
</dbReference>
<dbReference type="InterPro" id="IPR013759">
    <property type="entry name" value="Topo_IIA_B_C"/>
</dbReference>
<dbReference type="InterPro" id="IPR013506">
    <property type="entry name" value="Topo_IIA_bsu_dom2"/>
</dbReference>
<dbReference type="InterPro" id="IPR018522">
    <property type="entry name" value="TopoIIA_CS"/>
</dbReference>
<dbReference type="InterPro" id="IPR006171">
    <property type="entry name" value="TOPRIM_dom"/>
</dbReference>
<dbReference type="InterPro" id="IPR034160">
    <property type="entry name" value="TOPRIM_GyrB"/>
</dbReference>
<dbReference type="NCBIfam" id="TIGR01059">
    <property type="entry name" value="gyrB"/>
    <property type="match status" value="1"/>
</dbReference>
<dbReference type="NCBIfam" id="NF004189">
    <property type="entry name" value="PRK05644.1"/>
    <property type="match status" value="1"/>
</dbReference>
<dbReference type="NCBIfam" id="NF011501">
    <property type="entry name" value="PRK14939.1"/>
    <property type="match status" value="1"/>
</dbReference>
<dbReference type="PANTHER" id="PTHR45866:SF1">
    <property type="entry name" value="DNA GYRASE SUBUNIT B, MITOCHONDRIAL"/>
    <property type="match status" value="1"/>
</dbReference>
<dbReference type="PANTHER" id="PTHR45866">
    <property type="entry name" value="DNA GYRASE/TOPOISOMERASE SUBUNIT B"/>
    <property type="match status" value="1"/>
</dbReference>
<dbReference type="Pfam" id="PF00204">
    <property type="entry name" value="DNA_gyraseB"/>
    <property type="match status" value="1"/>
</dbReference>
<dbReference type="Pfam" id="PF00986">
    <property type="entry name" value="DNA_gyraseB_C"/>
    <property type="match status" value="1"/>
</dbReference>
<dbReference type="Pfam" id="PF21249">
    <property type="entry name" value="GyrB_hook"/>
    <property type="match status" value="1"/>
</dbReference>
<dbReference type="Pfam" id="PF02518">
    <property type="entry name" value="HATPase_c"/>
    <property type="match status" value="1"/>
</dbReference>
<dbReference type="Pfam" id="PF01751">
    <property type="entry name" value="Toprim"/>
    <property type="match status" value="1"/>
</dbReference>
<dbReference type="PRINTS" id="PR01159">
    <property type="entry name" value="DNAGYRASEB"/>
</dbReference>
<dbReference type="PRINTS" id="PR00418">
    <property type="entry name" value="TPI2FAMILY"/>
</dbReference>
<dbReference type="SMART" id="SM00387">
    <property type="entry name" value="HATPase_c"/>
    <property type="match status" value="1"/>
</dbReference>
<dbReference type="SMART" id="SM00433">
    <property type="entry name" value="TOP2c"/>
    <property type="match status" value="1"/>
</dbReference>
<dbReference type="SUPFAM" id="SSF55874">
    <property type="entry name" value="ATPase domain of HSP90 chaperone/DNA topoisomerase II/histidine kinase"/>
    <property type="match status" value="1"/>
</dbReference>
<dbReference type="SUPFAM" id="SSF54211">
    <property type="entry name" value="Ribosomal protein S5 domain 2-like"/>
    <property type="match status" value="1"/>
</dbReference>
<dbReference type="SUPFAM" id="SSF56719">
    <property type="entry name" value="Type II DNA topoisomerase"/>
    <property type="match status" value="1"/>
</dbReference>
<dbReference type="PROSITE" id="PS00177">
    <property type="entry name" value="TOPOISOMERASE_II"/>
    <property type="match status" value="1"/>
</dbReference>
<dbReference type="PROSITE" id="PS50880">
    <property type="entry name" value="TOPRIM"/>
    <property type="match status" value="1"/>
</dbReference>
<evidence type="ECO:0000255" key="1">
    <source>
        <dbReference type="HAMAP-Rule" id="MF_01898"/>
    </source>
</evidence>
<accession>Q4UKX5</accession>